<dbReference type="EC" id="1.17.7.3" evidence="1"/>
<dbReference type="EMBL" id="AP009247">
    <property type="protein sequence ID" value="BAF61483.1"/>
    <property type="molecule type" value="Genomic_DNA"/>
</dbReference>
<dbReference type="RefSeq" id="WP_011929753.1">
    <property type="nucleotide sequence ID" value="NC_009465.1"/>
</dbReference>
<dbReference type="SMR" id="A5CX35"/>
<dbReference type="STRING" id="412965.COSY_0358"/>
<dbReference type="KEGG" id="vok:COSY_0358"/>
<dbReference type="eggNOG" id="COG0821">
    <property type="taxonomic scope" value="Bacteria"/>
</dbReference>
<dbReference type="HOGENOM" id="CLU_042258_0_0_6"/>
<dbReference type="OrthoDB" id="9803214at2"/>
<dbReference type="UniPathway" id="UPA00056">
    <property type="reaction ID" value="UER00096"/>
</dbReference>
<dbReference type="Proteomes" id="UP000000247">
    <property type="component" value="Chromosome"/>
</dbReference>
<dbReference type="GO" id="GO:0051539">
    <property type="term" value="F:4 iron, 4 sulfur cluster binding"/>
    <property type="evidence" value="ECO:0007669"/>
    <property type="project" value="UniProtKB-UniRule"/>
</dbReference>
<dbReference type="GO" id="GO:0046429">
    <property type="term" value="F:4-hydroxy-3-methylbut-2-en-1-yl diphosphate synthase activity (ferredoxin)"/>
    <property type="evidence" value="ECO:0007669"/>
    <property type="project" value="UniProtKB-UniRule"/>
</dbReference>
<dbReference type="GO" id="GO:0141197">
    <property type="term" value="F:4-hydroxy-3-methylbut-2-enyl-diphosphate synthase activity (flavodoxin)"/>
    <property type="evidence" value="ECO:0007669"/>
    <property type="project" value="UniProtKB-EC"/>
</dbReference>
<dbReference type="GO" id="GO:0005506">
    <property type="term" value="F:iron ion binding"/>
    <property type="evidence" value="ECO:0007669"/>
    <property type="project" value="InterPro"/>
</dbReference>
<dbReference type="GO" id="GO:0019288">
    <property type="term" value="P:isopentenyl diphosphate biosynthetic process, methylerythritol 4-phosphate pathway"/>
    <property type="evidence" value="ECO:0007669"/>
    <property type="project" value="UniProtKB-UniRule"/>
</dbReference>
<dbReference type="GO" id="GO:0016114">
    <property type="term" value="P:terpenoid biosynthetic process"/>
    <property type="evidence" value="ECO:0007669"/>
    <property type="project" value="InterPro"/>
</dbReference>
<dbReference type="FunFam" id="3.20.20.20:FF:000001">
    <property type="entry name" value="4-hydroxy-3-methylbut-2-en-1-yl diphosphate synthase (flavodoxin)"/>
    <property type="match status" value="1"/>
</dbReference>
<dbReference type="Gene3D" id="3.20.20.20">
    <property type="entry name" value="Dihydropteroate synthase-like"/>
    <property type="match status" value="1"/>
</dbReference>
<dbReference type="Gene3D" id="3.30.413.10">
    <property type="entry name" value="Sulfite Reductase Hemoprotein, domain 1"/>
    <property type="match status" value="1"/>
</dbReference>
<dbReference type="HAMAP" id="MF_00159">
    <property type="entry name" value="IspG"/>
    <property type="match status" value="1"/>
</dbReference>
<dbReference type="InterPro" id="IPR011005">
    <property type="entry name" value="Dihydropteroate_synth-like_sf"/>
</dbReference>
<dbReference type="InterPro" id="IPR016425">
    <property type="entry name" value="IspG_bac"/>
</dbReference>
<dbReference type="InterPro" id="IPR004588">
    <property type="entry name" value="IspG_bac-typ"/>
</dbReference>
<dbReference type="InterPro" id="IPR045854">
    <property type="entry name" value="NO2/SO3_Rdtase_4Fe4S_sf"/>
</dbReference>
<dbReference type="NCBIfam" id="TIGR00612">
    <property type="entry name" value="ispG_gcpE"/>
    <property type="match status" value="1"/>
</dbReference>
<dbReference type="NCBIfam" id="NF001540">
    <property type="entry name" value="PRK00366.1"/>
    <property type="match status" value="1"/>
</dbReference>
<dbReference type="PANTHER" id="PTHR30454">
    <property type="entry name" value="4-HYDROXY-3-METHYLBUT-2-EN-1-YL DIPHOSPHATE SYNTHASE"/>
    <property type="match status" value="1"/>
</dbReference>
<dbReference type="PANTHER" id="PTHR30454:SF0">
    <property type="entry name" value="4-HYDROXY-3-METHYLBUT-2-EN-1-YL DIPHOSPHATE SYNTHASE (FERREDOXIN), CHLOROPLASTIC"/>
    <property type="match status" value="1"/>
</dbReference>
<dbReference type="Pfam" id="PF04551">
    <property type="entry name" value="GcpE"/>
    <property type="match status" value="1"/>
</dbReference>
<dbReference type="PIRSF" id="PIRSF004640">
    <property type="entry name" value="IspG"/>
    <property type="match status" value="1"/>
</dbReference>
<dbReference type="SUPFAM" id="SSF51717">
    <property type="entry name" value="Dihydropteroate synthetase-like"/>
    <property type="match status" value="1"/>
</dbReference>
<dbReference type="SUPFAM" id="SSF56014">
    <property type="entry name" value="Nitrite and sulphite reductase 4Fe-4S domain-like"/>
    <property type="match status" value="1"/>
</dbReference>
<feature type="chain" id="PRO_1000011540" description="4-hydroxy-3-methylbut-2-en-1-yl diphosphate synthase (flavodoxin)">
    <location>
        <begin position="1"/>
        <end position="358"/>
    </location>
</feature>
<feature type="binding site" evidence="1">
    <location>
        <position position="270"/>
    </location>
    <ligand>
        <name>[4Fe-4S] cluster</name>
        <dbReference type="ChEBI" id="CHEBI:49883"/>
    </ligand>
</feature>
<feature type="binding site" evidence="1">
    <location>
        <position position="273"/>
    </location>
    <ligand>
        <name>[4Fe-4S] cluster</name>
        <dbReference type="ChEBI" id="CHEBI:49883"/>
    </ligand>
</feature>
<feature type="binding site" evidence="1">
    <location>
        <position position="305"/>
    </location>
    <ligand>
        <name>[4Fe-4S] cluster</name>
        <dbReference type="ChEBI" id="CHEBI:49883"/>
    </ligand>
</feature>
<feature type="binding site" evidence="1">
    <location>
        <position position="312"/>
    </location>
    <ligand>
        <name>[4Fe-4S] cluster</name>
        <dbReference type="ChEBI" id="CHEBI:49883"/>
    </ligand>
</feature>
<organism>
    <name type="scientific">Vesicomyosocius okutanii subsp. Calyptogena okutanii (strain HA)</name>
    <dbReference type="NCBI Taxonomy" id="412965"/>
    <lineage>
        <taxon>Bacteria</taxon>
        <taxon>Pseudomonadati</taxon>
        <taxon>Pseudomonadota</taxon>
        <taxon>Gammaproteobacteria</taxon>
        <taxon>Candidatus Pseudothioglobaceae</taxon>
        <taxon>Candidatus Vesicomyosocius</taxon>
    </lineage>
</organism>
<evidence type="ECO:0000255" key="1">
    <source>
        <dbReference type="HAMAP-Rule" id="MF_00159"/>
    </source>
</evidence>
<accession>A5CX35</accession>
<keyword id="KW-0004">4Fe-4S</keyword>
<keyword id="KW-0408">Iron</keyword>
<keyword id="KW-0411">Iron-sulfur</keyword>
<keyword id="KW-0414">Isoprene biosynthesis</keyword>
<keyword id="KW-0479">Metal-binding</keyword>
<keyword id="KW-0560">Oxidoreductase</keyword>
<keyword id="KW-1185">Reference proteome</keyword>
<name>ISPG_VESOH</name>
<comment type="function">
    <text evidence="1">Converts 2C-methyl-D-erythritol 2,4-cyclodiphosphate (ME-2,4cPP) into 1-hydroxy-2-methyl-2-(E)-butenyl 4-diphosphate.</text>
</comment>
<comment type="catalytic activity">
    <reaction evidence="1">
        <text>(2E)-4-hydroxy-3-methylbut-2-enyl diphosphate + oxidized [flavodoxin] + H2O + 2 H(+) = 2-C-methyl-D-erythritol 2,4-cyclic diphosphate + reduced [flavodoxin]</text>
        <dbReference type="Rhea" id="RHEA:43604"/>
        <dbReference type="Rhea" id="RHEA-COMP:10622"/>
        <dbReference type="Rhea" id="RHEA-COMP:10623"/>
        <dbReference type="ChEBI" id="CHEBI:15377"/>
        <dbReference type="ChEBI" id="CHEBI:15378"/>
        <dbReference type="ChEBI" id="CHEBI:57618"/>
        <dbReference type="ChEBI" id="CHEBI:58210"/>
        <dbReference type="ChEBI" id="CHEBI:58483"/>
        <dbReference type="ChEBI" id="CHEBI:128753"/>
        <dbReference type="EC" id="1.17.7.3"/>
    </reaction>
</comment>
<comment type="cofactor">
    <cofactor evidence="1">
        <name>[4Fe-4S] cluster</name>
        <dbReference type="ChEBI" id="CHEBI:49883"/>
    </cofactor>
    <text evidence="1">Binds 1 [4Fe-4S] cluster.</text>
</comment>
<comment type="pathway">
    <text evidence="1">Isoprenoid biosynthesis; isopentenyl diphosphate biosynthesis via DXP pathway; isopentenyl diphosphate from 1-deoxy-D-xylulose 5-phosphate: step 5/6.</text>
</comment>
<comment type="similarity">
    <text evidence="1">Belongs to the IspG family.</text>
</comment>
<sequence>MKPIHTIHRRESKQIFVGNVAIGGDAPISVQSMTNTKTTDVKATLKQISEIEEAGADLVRVSIPTMEAARAFKVIKEQVTIPLIADIHFDYKIALEVAKYGADCLRINPGNIGRVDYISEVVASAKDHDIPIRIGVNAGSLEKYLQKKYTRPTPEAMVESALRHIDILDKLNFDNFKISLKASEIFMTVFAYQQLSSQIDNPLHLGITEAGSLSFGTVKSSIGLGLLLSKGIGDTIRVSLASDPVDEVRVAFNILKSLNLRQKGVNLIACPSCSRQKFDVIKVVSELESRFKDIITPIDVSVIGCVVNGPGEAKSVSVGLTGGDPNLLYLDGKTHSKIINENLVNELEAQVRNSLKNL</sequence>
<gene>
    <name evidence="1" type="primary">ispG</name>
    <name type="ordered locus">COSY_0358</name>
</gene>
<reference key="1">
    <citation type="journal article" date="2007" name="Curr. Biol.">
        <title>Reduced genome of the thioautotrophic intracellular symbiont in a deep-sea clam, Calyptogena okutanii.</title>
        <authorList>
            <person name="Kuwahara H."/>
            <person name="Yoshida T."/>
            <person name="Takaki Y."/>
            <person name="Shimamura S."/>
            <person name="Nishi S."/>
            <person name="Harada M."/>
            <person name="Matsuyama K."/>
            <person name="Takishita K."/>
            <person name="Kawato M."/>
            <person name="Uematsu K."/>
            <person name="Fujiwara Y."/>
            <person name="Sato T."/>
            <person name="Kato C."/>
            <person name="Kitagawa M."/>
            <person name="Kato I."/>
            <person name="Maruyama T."/>
        </authorList>
    </citation>
    <scope>NUCLEOTIDE SEQUENCE [LARGE SCALE GENOMIC DNA]</scope>
    <source>
        <strain>HA</strain>
    </source>
</reference>
<proteinExistence type="inferred from homology"/>
<protein>
    <recommendedName>
        <fullName evidence="1">4-hydroxy-3-methylbut-2-en-1-yl diphosphate synthase (flavodoxin)</fullName>
        <ecNumber evidence="1">1.17.7.3</ecNumber>
    </recommendedName>
    <alternativeName>
        <fullName evidence="1">1-hydroxy-2-methyl-2-(E)-butenyl 4-diphosphate synthase</fullName>
    </alternativeName>
</protein>